<dbReference type="EC" id="1.2.1.79"/>
<dbReference type="EMBL" id="AE000516">
    <property type="protein sequence ID" value="AAK44465.1"/>
    <property type="status" value="ALT_INIT"/>
    <property type="molecule type" value="Genomic_DNA"/>
</dbReference>
<dbReference type="PIR" id="F70687">
    <property type="entry name" value="F70687"/>
</dbReference>
<dbReference type="RefSeq" id="WP_003912534.1">
    <property type="nucleotide sequence ID" value="NZ_KK341227.1"/>
</dbReference>
<dbReference type="SMR" id="P9WNX8"/>
<dbReference type="KEGG" id="mtc:MT0245"/>
<dbReference type="HOGENOM" id="CLU_005391_1_0_11"/>
<dbReference type="Proteomes" id="UP000001020">
    <property type="component" value="Chromosome"/>
</dbReference>
<dbReference type="GO" id="GO:0004030">
    <property type="term" value="F:aldehyde dehydrogenase [NAD(P)+] activity"/>
    <property type="evidence" value="ECO:0007669"/>
    <property type="project" value="InterPro"/>
</dbReference>
<dbReference type="GO" id="GO:0004777">
    <property type="term" value="F:succinate-semialdehyde dehydrogenase (NAD+) activity"/>
    <property type="evidence" value="ECO:0007669"/>
    <property type="project" value="TreeGrafter"/>
</dbReference>
<dbReference type="GO" id="GO:0036243">
    <property type="term" value="F:succinate-semialdehyde dehydrogenase (NADP+) activity"/>
    <property type="evidence" value="ECO:0007669"/>
    <property type="project" value="UniProtKB-EC"/>
</dbReference>
<dbReference type="GO" id="GO:0006099">
    <property type="term" value="P:tricarboxylic acid cycle"/>
    <property type="evidence" value="ECO:0007669"/>
    <property type="project" value="UniProtKB-KW"/>
</dbReference>
<dbReference type="CDD" id="cd07100">
    <property type="entry name" value="ALDH_SSADH1_GabD1"/>
    <property type="match status" value="1"/>
</dbReference>
<dbReference type="FunFam" id="3.40.309.10:FF:000010">
    <property type="entry name" value="Gamma-aminobutyraldehyde dehydrogenase"/>
    <property type="match status" value="1"/>
</dbReference>
<dbReference type="FunFam" id="3.40.605.10:FF:000012">
    <property type="entry name" value="NAD-dependent succinate-semialdehyde dehydrogenase"/>
    <property type="match status" value="1"/>
</dbReference>
<dbReference type="Gene3D" id="3.40.605.10">
    <property type="entry name" value="Aldehyde Dehydrogenase, Chain A, domain 1"/>
    <property type="match status" value="1"/>
</dbReference>
<dbReference type="Gene3D" id="3.40.309.10">
    <property type="entry name" value="Aldehyde Dehydrogenase, Chain A, domain 2"/>
    <property type="match status" value="1"/>
</dbReference>
<dbReference type="InterPro" id="IPR016161">
    <property type="entry name" value="Ald_DH/histidinol_DH"/>
</dbReference>
<dbReference type="InterPro" id="IPR016163">
    <property type="entry name" value="Ald_DH_C"/>
</dbReference>
<dbReference type="InterPro" id="IPR016160">
    <property type="entry name" value="Ald_DH_CS_CYS"/>
</dbReference>
<dbReference type="InterPro" id="IPR016162">
    <property type="entry name" value="Ald_DH_N"/>
</dbReference>
<dbReference type="InterPro" id="IPR015590">
    <property type="entry name" value="Aldehyde_DH_dom"/>
</dbReference>
<dbReference type="InterPro" id="IPR044148">
    <property type="entry name" value="ALDH_GabD1-like"/>
</dbReference>
<dbReference type="InterPro" id="IPR047110">
    <property type="entry name" value="GABD/Sad-like"/>
</dbReference>
<dbReference type="NCBIfam" id="NF006915">
    <property type="entry name" value="PRK09406.1"/>
    <property type="match status" value="1"/>
</dbReference>
<dbReference type="PANTHER" id="PTHR43217">
    <property type="entry name" value="SUCCINATE SEMIALDEHYDE DEHYDROGENASE [NAD(P)+] SAD"/>
    <property type="match status" value="1"/>
</dbReference>
<dbReference type="PANTHER" id="PTHR43217:SF1">
    <property type="entry name" value="SUCCINATE SEMIALDEHYDE DEHYDROGENASE [NAD(P)+] SAD"/>
    <property type="match status" value="1"/>
</dbReference>
<dbReference type="Pfam" id="PF00171">
    <property type="entry name" value="Aldedh"/>
    <property type="match status" value="1"/>
</dbReference>
<dbReference type="SUPFAM" id="SSF53720">
    <property type="entry name" value="ALDH-like"/>
    <property type="match status" value="1"/>
</dbReference>
<dbReference type="PROSITE" id="PS00070">
    <property type="entry name" value="ALDEHYDE_DEHYDR_CYS"/>
    <property type="match status" value="1"/>
</dbReference>
<evidence type="ECO:0000250" key="1"/>
<evidence type="ECO:0000255" key="2">
    <source>
        <dbReference type="PROSITE-ProRule" id="PRU10008"/>
    </source>
</evidence>
<evidence type="ECO:0000305" key="3"/>
<protein>
    <recommendedName>
        <fullName>Succinate-semialdehyde dehydrogenase [NADP(+)] 1</fullName>
        <shortName>SSADH 1</shortName>
        <shortName>SSDH 1</shortName>
        <ecNumber>1.2.1.79</ecNumber>
    </recommendedName>
</protein>
<sequence length="457" mass="48545">MPIATINPATGETVKTFTAATDDEVDAAIARAHRRFADYRQTSFAQRARWANATADLLEAEADQAAAMMTLEMGKTLAAAKAEALKCAKGFRYYAENAEALLADEPADAAKVGASAAYGRYQPLGVILAVMPWNFPLWQAVRFAAPALMAGNVGLLKHASNVPQCALYLADVIARGGFPDGCFQTLLVSSGAVEAILRDPRVAAATLTGSEPAGQSVGAIAGNEIKPTVLELGGSDPFIVMPSADLDAAVSTAVTGRVQNNGQSCIAAKRFIVHADIYDDFVDKFVARMAALRVGDPTDPDTDVGPLATEQGRNEVAKQVEDAAAAGAVIRCGGKRLDRPGWFYPPTVITDISKDMALYTEEVFGPVASVFRAANIDEAVEIANATTFGLGSNAWTRDETEQRRFIDDIVAGQVFINGMTVSYPELPFGGVKRSGYGRELSAHGIREFCNIKTVWIA</sequence>
<comment type="function">
    <text evidence="1">Catalyzes the NADP(+)-dependent oxidation of succinate semialdehyde to succinate. It is believed to be the main source of succinate semialdehyde dehydrogenase activity in Mycobacterium. NAD(+) can substitute for NADP(+), but enzymatic activity is three times reduced (By similarity).</text>
</comment>
<comment type="catalytic activity">
    <reaction>
        <text>succinate semialdehyde + NADP(+) + H2O = succinate + NADPH + 2 H(+)</text>
        <dbReference type="Rhea" id="RHEA:13213"/>
        <dbReference type="ChEBI" id="CHEBI:15377"/>
        <dbReference type="ChEBI" id="CHEBI:15378"/>
        <dbReference type="ChEBI" id="CHEBI:30031"/>
        <dbReference type="ChEBI" id="CHEBI:57706"/>
        <dbReference type="ChEBI" id="CHEBI:57783"/>
        <dbReference type="ChEBI" id="CHEBI:58349"/>
        <dbReference type="EC" id="1.2.1.79"/>
    </reaction>
</comment>
<comment type="similarity">
    <text evidence="3">Belongs to the aldehyde dehydrogenase family.</text>
</comment>
<comment type="sequence caution" evidence="3">
    <conflict type="erroneous initiation">
        <sequence resource="EMBL-CDS" id="AAK44465"/>
    </conflict>
</comment>
<reference key="1">
    <citation type="journal article" date="2002" name="J. Bacteriol.">
        <title>Whole-genome comparison of Mycobacterium tuberculosis clinical and laboratory strains.</title>
        <authorList>
            <person name="Fleischmann R.D."/>
            <person name="Alland D."/>
            <person name="Eisen J.A."/>
            <person name="Carpenter L."/>
            <person name="White O."/>
            <person name="Peterson J.D."/>
            <person name="DeBoy R.T."/>
            <person name="Dodson R.J."/>
            <person name="Gwinn M.L."/>
            <person name="Haft D.H."/>
            <person name="Hickey E.K."/>
            <person name="Kolonay J.F."/>
            <person name="Nelson W.C."/>
            <person name="Umayam L.A."/>
            <person name="Ermolaeva M.D."/>
            <person name="Salzberg S.L."/>
            <person name="Delcher A."/>
            <person name="Utterback T.R."/>
            <person name="Weidman J.F."/>
            <person name="Khouri H.M."/>
            <person name="Gill J."/>
            <person name="Mikula A."/>
            <person name="Bishai W."/>
            <person name="Jacobs W.R. Jr."/>
            <person name="Venter J.C."/>
            <person name="Fraser C.M."/>
        </authorList>
    </citation>
    <scope>NUCLEOTIDE SEQUENCE [LARGE SCALE GENOMIC DNA]</scope>
    <source>
        <strain>CDC 1551 / Oshkosh</strain>
    </source>
</reference>
<feature type="chain" id="PRO_0000427049" description="Succinate-semialdehyde dehydrogenase [NADP(+)] 1">
    <location>
        <begin position="1"/>
        <end position="457"/>
    </location>
</feature>
<feature type="active site" description="Proton acceptor" evidence="2">
    <location>
        <position position="231"/>
    </location>
</feature>
<feature type="active site" description="Nucleophile" evidence="2">
    <location>
        <position position="265"/>
    </location>
</feature>
<feature type="binding site" evidence="1">
    <location>
        <begin position="133"/>
        <end position="134"/>
    </location>
    <ligand>
        <name>NADP(+)</name>
        <dbReference type="ChEBI" id="CHEBI:58349"/>
    </ligand>
</feature>
<feature type="binding site" evidence="1">
    <location>
        <begin position="157"/>
        <end position="160"/>
    </location>
    <ligand>
        <name>NADP(+)</name>
        <dbReference type="ChEBI" id="CHEBI:58349"/>
    </ligand>
</feature>
<feature type="binding site" evidence="1">
    <location>
        <begin position="209"/>
        <end position="210"/>
    </location>
    <ligand>
        <name>NADP(+)</name>
        <dbReference type="ChEBI" id="CHEBI:58349"/>
    </ligand>
</feature>
<feature type="binding site" evidence="1">
    <location>
        <position position="232"/>
    </location>
    <ligand>
        <name>NADP(+)</name>
        <dbReference type="ChEBI" id="CHEBI:58349"/>
    </ligand>
</feature>
<feature type="binding site" evidence="1">
    <location>
        <position position="362"/>
    </location>
    <ligand>
        <name>NADP(+)</name>
        <dbReference type="ChEBI" id="CHEBI:58349"/>
    </ligand>
</feature>
<name>GABD1_MYCTO</name>
<keyword id="KW-0521">NADP</keyword>
<keyword id="KW-0560">Oxidoreductase</keyword>
<keyword id="KW-1185">Reference proteome</keyword>
<keyword id="KW-0816">Tricarboxylic acid cycle</keyword>
<proteinExistence type="inferred from homology"/>
<accession>P9WNX8</accession>
<accession>L0T5V9</accession>
<accession>P71989</accession>
<accession>Q7DA77</accession>
<gene>
    <name type="primary">gabD1</name>
    <name type="ordered locus">MT0245</name>
</gene>
<organism>
    <name type="scientific">Mycobacterium tuberculosis (strain CDC 1551 / Oshkosh)</name>
    <dbReference type="NCBI Taxonomy" id="83331"/>
    <lineage>
        <taxon>Bacteria</taxon>
        <taxon>Bacillati</taxon>
        <taxon>Actinomycetota</taxon>
        <taxon>Actinomycetes</taxon>
        <taxon>Mycobacteriales</taxon>
        <taxon>Mycobacteriaceae</taxon>
        <taxon>Mycobacterium</taxon>
        <taxon>Mycobacterium tuberculosis complex</taxon>
    </lineage>
</organism>